<proteinExistence type="inferred from homology"/>
<keyword id="KW-0963">Cytoplasm</keyword>
<keyword id="KW-0441">Lipid A biosynthesis</keyword>
<keyword id="KW-0444">Lipid biosynthesis</keyword>
<keyword id="KW-0443">Lipid metabolism</keyword>
<keyword id="KW-0456">Lyase</keyword>
<organism>
    <name type="scientific">Chlamydia muridarum (strain MoPn / Nigg)</name>
    <dbReference type="NCBI Taxonomy" id="243161"/>
    <lineage>
        <taxon>Bacteria</taxon>
        <taxon>Pseudomonadati</taxon>
        <taxon>Chlamydiota</taxon>
        <taxon>Chlamydiia</taxon>
        <taxon>Chlamydiales</taxon>
        <taxon>Chlamydiaceae</taxon>
        <taxon>Chlamydia/Chlamydophila group</taxon>
        <taxon>Chlamydia</taxon>
    </lineage>
</organism>
<name>FABZ_CHLMU</name>
<sequence length="153" mass="16703">MSEKPVLGIQDIQNLLPHRYPFLLVDKILSYDLNTRSIVAQKNVTINEPFFVGHFPEAPIMPGVLILEALAQAAGVLLGIILENDRDKKIALFLGIQKAKFRQPVKPGDVLILKAEFSLISAKGGKAIAQAFVGSQIVAEGELSFVLVKKESI</sequence>
<accession>Q9PJL0</accession>
<comment type="function">
    <text evidence="1">Involved in unsaturated fatty acids biosynthesis. Catalyzes the dehydration of short chain beta-hydroxyacyl-ACPs and long chain saturated and unsaturated beta-hydroxyacyl-ACPs.</text>
</comment>
<comment type="catalytic activity">
    <reaction evidence="1">
        <text>a (3R)-hydroxyacyl-[ACP] = a (2E)-enoyl-[ACP] + H2O</text>
        <dbReference type="Rhea" id="RHEA:13097"/>
        <dbReference type="Rhea" id="RHEA-COMP:9925"/>
        <dbReference type="Rhea" id="RHEA-COMP:9945"/>
        <dbReference type="ChEBI" id="CHEBI:15377"/>
        <dbReference type="ChEBI" id="CHEBI:78784"/>
        <dbReference type="ChEBI" id="CHEBI:78827"/>
        <dbReference type="EC" id="4.2.1.59"/>
    </reaction>
</comment>
<comment type="subcellular location">
    <subcellularLocation>
        <location evidence="1">Cytoplasm</location>
    </subcellularLocation>
</comment>
<comment type="similarity">
    <text evidence="1">Belongs to the thioester dehydratase family. FabZ subfamily.</text>
</comment>
<dbReference type="EC" id="4.2.1.59" evidence="1"/>
<dbReference type="EMBL" id="AE002160">
    <property type="protein sequence ID" value="AAF39621.1"/>
    <property type="molecule type" value="Genomic_DNA"/>
</dbReference>
<dbReference type="PIR" id="H81661">
    <property type="entry name" value="H81661"/>
</dbReference>
<dbReference type="RefSeq" id="WP_010231672.1">
    <property type="nucleotide sequence ID" value="NZ_CP063055.1"/>
</dbReference>
<dbReference type="SMR" id="Q9PJL0"/>
<dbReference type="GeneID" id="1246186"/>
<dbReference type="KEGG" id="cmu:TC_0819"/>
<dbReference type="eggNOG" id="COG0764">
    <property type="taxonomic scope" value="Bacteria"/>
</dbReference>
<dbReference type="HOGENOM" id="CLU_078912_3_3_0"/>
<dbReference type="OrthoDB" id="9772788at2"/>
<dbReference type="Proteomes" id="UP000000800">
    <property type="component" value="Chromosome"/>
</dbReference>
<dbReference type="GO" id="GO:0005737">
    <property type="term" value="C:cytoplasm"/>
    <property type="evidence" value="ECO:0007669"/>
    <property type="project" value="UniProtKB-SubCell"/>
</dbReference>
<dbReference type="GO" id="GO:0016020">
    <property type="term" value="C:membrane"/>
    <property type="evidence" value="ECO:0007669"/>
    <property type="project" value="GOC"/>
</dbReference>
<dbReference type="GO" id="GO:0019171">
    <property type="term" value="F:(3R)-hydroxyacyl-[acyl-carrier-protein] dehydratase activity"/>
    <property type="evidence" value="ECO:0007669"/>
    <property type="project" value="UniProtKB-EC"/>
</dbReference>
<dbReference type="GO" id="GO:0006633">
    <property type="term" value="P:fatty acid biosynthetic process"/>
    <property type="evidence" value="ECO:0007669"/>
    <property type="project" value="UniProtKB-UniRule"/>
</dbReference>
<dbReference type="GO" id="GO:0009245">
    <property type="term" value="P:lipid A biosynthetic process"/>
    <property type="evidence" value="ECO:0007669"/>
    <property type="project" value="UniProtKB-UniRule"/>
</dbReference>
<dbReference type="CDD" id="cd01288">
    <property type="entry name" value="FabZ"/>
    <property type="match status" value="1"/>
</dbReference>
<dbReference type="FunFam" id="3.10.129.10:FF:000001">
    <property type="entry name" value="3-hydroxyacyl-[acyl-carrier-protein] dehydratase FabZ"/>
    <property type="match status" value="1"/>
</dbReference>
<dbReference type="Gene3D" id="3.10.129.10">
    <property type="entry name" value="Hotdog Thioesterase"/>
    <property type="match status" value="1"/>
</dbReference>
<dbReference type="HAMAP" id="MF_00406">
    <property type="entry name" value="FabZ"/>
    <property type="match status" value="1"/>
</dbReference>
<dbReference type="InterPro" id="IPR013114">
    <property type="entry name" value="FabA_FabZ"/>
</dbReference>
<dbReference type="InterPro" id="IPR010084">
    <property type="entry name" value="FabZ"/>
</dbReference>
<dbReference type="InterPro" id="IPR029069">
    <property type="entry name" value="HotDog_dom_sf"/>
</dbReference>
<dbReference type="NCBIfam" id="TIGR01750">
    <property type="entry name" value="fabZ"/>
    <property type="match status" value="1"/>
</dbReference>
<dbReference type="NCBIfam" id="NF000582">
    <property type="entry name" value="PRK00006.1"/>
    <property type="match status" value="1"/>
</dbReference>
<dbReference type="PANTHER" id="PTHR30272">
    <property type="entry name" value="3-HYDROXYACYL-[ACYL-CARRIER-PROTEIN] DEHYDRATASE"/>
    <property type="match status" value="1"/>
</dbReference>
<dbReference type="PANTHER" id="PTHR30272:SF1">
    <property type="entry name" value="3-HYDROXYACYL-[ACYL-CARRIER-PROTEIN] DEHYDRATASE"/>
    <property type="match status" value="1"/>
</dbReference>
<dbReference type="Pfam" id="PF07977">
    <property type="entry name" value="FabA"/>
    <property type="match status" value="1"/>
</dbReference>
<dbReference type="SUPFAM" id="SSF54637">
    <property type="entry name" value="Thioesterase/thiol ester dehydrase-isomerase"/>
    <property type="match status" value="1"/>
</dbReference>
<evidence type="ECO:0000255" key="1">
    <source>
        <dbReference type="HAMAP-Rule" id="MF_00406"/>
    </source>
</evidence>
<reference key="1">
    <citation type="journal article" date="2000" name="Nucleic Acids Res.">
        <title>Genome sequences of Chlamydia trachomatis MoPn and Chlamydia pneumoniae AR39.</title>
        <authorList>
            <person name="Read T.D."/>
            <person name="Brunham R.C."/>
            <person name="Shen C."/>
            <person name="Gill S.R."/>
            <person name="Heidelberg J.F."/>
            <person name="White O."/>
            <person name="Hickey E.K."/>
            <person name="Peterson J.D."/>
            <person name="Utterback T.R."/>
            <person name="Berry K.J."/>
            <person name="Bass S."/>
            <person name="Linher K.D."/>
            <person name="Weidman J.F."/>
            <person name="Khouri H.M."/>
            <person name="Craven B."/>
            <person name="Bowman C."/>
            <person name="Dodson R.J."/>
            <person name="Gwinn M.L."/>
            <person name="Nelson W.C."/>
            <person name="DeBoy R.T."/>
            <person name="Kolonay J.F."/>
            <person name="McClarty G."/>
            <person name="Salzberg S.L."/>
            <person name="Eisen J.A."/>
            <person name="Fraser C.M."/>
        </authorList>
    </citation>
    <scope>NUCLEOTIDE SEQUENCE [LARGE SCALE GENOMIC DNA]</scope>
    <source>
        <strain>MoPn / Nigg</strain>
    </source>
</reference>
<gene>
    <name evidence="1" type="primary">fabZ</name>
    <name type="ordered locus">TC_0819</name>
</gene>
<feature type="chain" id="PRO_0000091662" description="3-hydroxyacyl-[acyl-carrier-protein] dehydratase FabZ">
    <location>
        <begin position="1"/>
        <end position="153"/>
    </location>
</feature>
<feature type="active site" evidence="1">
    <location>
        <position position="54"/>
    </location>
</feature>
<protein>
    <recommendedName>
        <fullName evidence="1">3-hydroxyacyl-[acyl-carrier-protein] dehydratase FabZ</fullName>
        <ecNumber evidence="1">4.2.1.59</ecNumber>
    </recommendedName>
    <alternativeName>
        <fullName evidence="1">(3R)-hydroxymyristoyl-[acyl-carrier-protein] dehydratase</fullName>
        <shortName evidence="1">(3R)-hydroxymyristoyl-ACP dehydrase</shortName>
    </alternativeName>
    <alternativeName>
        <fullName evidence="1">Beta-hydroxyacyl-ACP dehydratase</fullName>
    </alternativeName>
</protein>